<comment type="function">
    <text evidence="1">Converts GTP to 7,8-dihydroneopterin triphosphate.</text>
</comment>
<comment type="catalytic activity">
    <reaction evidence="1">
        <text>GTP + H2O = 7,8-dihydroneopterin 3'-triphosphate + formate + H(+)</text>
        <dbReference type="Rhea" id="RHEA:17473"/>
        <dbReference type="ChEBI" id="CHEBI:15377"/>
        <dbReference type="ChEBI" id="CHEBI:15378"/>
        <dbReference type="ChEBI" id="CHEBI:15740"/>
        <dbReference type="ChEBI" id="CHEBI:37565"/>
        <dbReference type="ChEBI" id="CHEBI:58462"/>
        <dbReference type="EC" id="3.5.4.16"/>
    </reaction>
</comment>
<comment type="pathway">
    <text evidence="1">Cofactor biosynthesis; 7,8-dihydroneopterin triphosphate biosynthesis; 7,8-dihydroneopterin triphosphate from GTP: step 1/1.</text>
</comment>
<comment type="similarity">
    <text evidence="1">Belongs to the GTP cyclohydrolase IV family.</text>
</comment>
<name>GCH41_BURCH</name>
<reference key="1">
    <citation type="submission" date="2006-08" db="EMBL/GenBank/DDBJ databases">
        <title>Complete sequence of chromosome 2 of Burkholderia cenocepacia HI2424.</title>
        <authorList>
            <person name="Copeland A."/>
            <person name="Lucas S."/>
            <person name="Lapidus A."/>
            <person name="Barry K."/>
            <person name="Detter J.C."/>
            <person name="Glavina del Rio T."/>
            <person name="Hammon N."/>
            <person name="Israni S."/>
            <person name="Pitluck S."/>
            <person name="Chain P."/>
            <person name="Malfatti S."/>
            <person name="Shin M."/>
            <person name="Vergez L."/>
            <person name="Schmutz J."/>
            <person name="Larimer F."/>
            <person name="Land M."/>
            <person name="Hauser L."/>
            <person name="Kyrpides N."/>
            <person name="Kim E."/>
            <person name="LiPuma J.J."/>
            <person name="Gonzalez C.F."/>
            <person name="Konstantinidis K."/>
            <person name="Tiedje J.M."/>
            <person name="Richardson P."/>
        </authorList>
    </citation>
    <scope>NUCLEOTIDE SEQUENCE [LARGE SCALE GENOMIC DNA]</scope>
    <source>
        <strain>HI2424</strain>
    </source>
</reference>
<evidence type="ECO:0000255" key="1">
    <source>
        <dbReference type="HAMAP-Rule" id="MF_01527"/>
    </source>
</evidence>
<keyword id="KW-0378">Hydrolase</keyword>
<organism>
    <name type="scientific">Burkholderia cenocepacia (strain HI2424)</name>
    <dbReference type="NCBI Taxonomy" id="331272"/>
    <lineage>
        <taxon>Bacteria</taxon>
        <taxon>Pseudomonadati</taxon>
        <taxon>Pseudomonadota</taxon>
        <taxon>Betaproteobacteria</taxon>
        <taxon>Burkholderiales</taxon>
        <taxon>Burkholderiaceae</taxon>
        <taxon>Burkholderia</taxon>
        <taxon>Burkholderia cepacia complex</taxon>
    </lineage>
</organism>
<sequence>MNQMNPAFVMPDVQSTVDTRQIPIQRVGVKAVRHPLTVCTESGDVQPTVGVWNLDVRLPADQKGTHMSRFVALLEENRAPLTVERFRAMLASMLVKLEAEAGRIEVTFPYFVNKTAPVSGVQSLLDYEVTLAGESRNGDTRLFLKVLVPVTSLCPCSKKISQYGAHNQRSHVTIDAELAADLPVEALIRIAEEEASCELWGLLKRPDEKFVTERAYENPKFVEDLVRDVAQRLDADERVVAYVLEAENFESIHNHSAYALIERDKRQAA</sequence>
<feature type="chain" id="PRO_0000289477" description="GTP cyclohydrolase FolE2 1">
    <location>
        <begin position="1"/>
        <end position="269"/>
    </location>
</feature>
<feature type="site" description="May be catalytically important" evidence="1">
    <location>
        <position position="154"/>
    </location>
</feature>
<gene>
    <name evidence="1" type="primary">folE2-1</name>
    <name type="ordered locus">Bcen2424_3880</name>
</gene>
<dbReference type="EC" id="3.5.4.16" evidence="1"/>
<dbReference type="EMBL" id="CP000459">
    <property type="protein sequence ID" value="ABK10617.1"/>
    <property type="molecule type" value="Genomic_DNA"/>
</dbReference>
<dbReference type="SMR" id="A0AYZ1"/>
<dbReference type="KEGG" id="bch:Bcen2424_3880"/>
<dbReference type="HOGENOM" id="CLU_062816_1_1_4"/>
<dbReference type="UniPathway" id="UPA00848">
    <property type="reaction ID" value="UER00151"/>
</dbReference>
<dbReference type="GO" id="GO:0003934">
    <property type="term" value="F:GTP cyclohydrolase I activity"/>
    <property type="evidence" value="ECO:0007669"/>
    <property type="project" value="UniProtKB-UniRule"/>
</dbReference>
<dbReference type="GO" id="GO:0046654">
    <property type="term" value="P:tetrahydrofolate biosynthetic process"/>
    <property type="evidence" value="ECO:0007669"/>
    <property type="project" value="UniProtKB-UniRule"/>
</dbReference>
<dbReference type="Gene3D" id="3.10.270.10">
    <property type="entry name" value="Urate Oxidase"/>
    <property type="match status" value="1"/>
</dbReference>
<dbReference type="HAMAP" id="MF_01527_B">
    <property type="entry name" value="GTP_cyclohydrol_B"/>
    <property type="match status" value="1"/>
</dbReference>
<dbReference type="InterPro" id="IPR022838">
    <property type="entry name" value="GTP_cyclohydrolase_FolE2"/>
</dbReference>
<dbReference type="InterPro" id="IPR003801">
    <property type="entry name" value="GTP_cyclohydrolase_FolE2/MptA"/>
</dbReference>
<dbReference type="NCBIfam" id="NF010200">
    <property type="entry name" value="PRK13674.1-1"/>
    <property type="match status" value="1"/>
</dbReference>
<dbReference type="PANTHER" id="PTHR36445">
    <property type="entry name" value="GTP CYCLOHYDROLASE MPTA"/>
    <property type="match status" value="1"/>
</dbReference>
<dbReference type="PANTHER" id="PTHR36445:SF1">
    <property type="entry name" value="GTP CYCLOHYDROLASE MPTA"/>
    <property type="match status" value="1"/>
</dbReference>
<dbReference type="Pfam" id="PF02649">
    <property type="entry name" value="GCHY-1"/>
    <property type="match status" value="1"/>
</dbReference>
<protein>
    <recommendedName>
        <fullName evidence="1">GTP cyclohydrolase FolE2 1</fullName>
        <ecNumber evidence="1">3.5.4.16</ecNumber>
    </recommendedName>
</protein>
<proteinExistence type="inferred from homology"/>
<accession>A0AYZ1</accession>